<keyword id="KW-0472">Membrane</keyword>
<keyword id="KW-1185">Reference proteome</keyword>
<keyword id="KW-0732">Signal</keyword>
<keyword id="KW-0812">Transmembrane</keyword>
<keyword id="KW-1133">Transmembrane helix</keyword>
<accession>A0A2R8Y7Y5</accession>
<feature type="signal peptide" evidence="1">
    <location>
        <begin position="1"/>
        <end position="24"/>
    </location>
</feature>
<feature type="chain" id="PRO_5015311287" description="Protein CIST1" evidence="1">
    <location>
        <begin position="25"/>
        <end position="234"/>
    </location>
</feature>
<feature type="topological domain" description="Extracellular" evidence="3">
    <location>
        <begin position="25"/>
        <end position="180"/>
    </location>
</feature>
<feature type="transmembrane region" description="Helical" evidence="1">
    <location>
        <begin position="181"/>
        <end position="201"/>
    </location>
</feature>
<feature type="topological domain" description="Cytoplasmic" evidence="3">
    <location>
        <begin position="202"/>
        <end position="234"/>
    </location>
</feature>
<feature type="region of interest" description="Disordered" evidence="2">
    <location>
        <begin position="41"/>
        <end position="174"/>
    </location>
</feature>
<feature type="compositionally biased region" description="Polar residues" evidence="2">
    <location>
        <begin position="41"/>
        <end position="121"/>
    </location>
</feature>
<feature type="compositionally biased region" description="Low complexity" evidence="2">
    <location>
        <begin position="122"/>
        <end position="140"/>
    </location>
</feature>
<feature type="compositionally biased region" description="Polar residues" evidence="2">
    <location>
        <begin position="141"/>
        <end position="159"/>
    </location>
</feature>
<reference key="1">
    <citation type="journal article" date="2004" name="Nature">
        <title>The DNA sequence and biology of human chromosome 19.</title>
        <authorList>
            <person name="Grimwood J."/>
            <person name="Gordon L.A."/>
            <person name="Olsen A.S."/>
            <person name="Terry A."/>
            <person name="Schmutz J."/>
            <person name="Lamerdin J.E."/>
            <person name="Hellsten U."/>
            <person name="Goodstein D."/>
            <person name="Couronne O."/>
            <person name="Tran-Gyamfi M."/>
            <person name="Aerts A."/>
            <person name="Altherr M."/>
            <person name="Ashworth L."/>
            <person name="Bajorek E."/>
            <person name="Black S."/>
            <person name="Branscomb E."/>
            <person name="Caenepeel S."/>
            <person name="Carrano A.V."/>
            <person name="Caoile C."/>
            <person name="Chan Y.M."/>
            <person name="Christensen M."/>
            <person name="Cleland C.A."/>
            <person name="Copeland A."/>
            <person name="Dalin E."/>
            <person name="Dehal P."/>
            <person name="Denys M."/>
            <person name="Detter J.C."/>
            <person name="Escobar J."/>
            <person name="Flowers D."/>
            <person name="Fotopulos D."/>
            <person name="Garcia C."/>
            <person name="Georgescu A.M."/>
            <person name="Glavina T."/>
            <person name="Gomez M."/>
            <person name="Gonzales E."/>
            <person name="Groza M."/>
            <person name="Hammon N."/>
            <person name="Hawkins T."/>
            <person name="Haydu L."/>
            <person name="Ho I."/>
            <person name="Huang W."/>
            <person name="Israni S."/>
            <person name="Jett J."/>
            <person name="Kadner K."/>
            <person name="Kimball H."/>
            <person name="Kobayashi A."/>
            <person name="Larionov V."/>
            <person name="Leem S.-H."/>
            <person name="Lopez F."/>
            <person name="Lou Y."/>
            <person name="Lowry S."/>
            <person name="Malfatti S."/>
            <person name="Martinez D."/>
            <person name="McCready P.M."/>
            <person name="Medina C."/>
            <person name="Morgan J."/>
            <person name="Nelson K."/>
            <person name="Nolan M."/>
            <person name="Ovcharenko I."/>
            <person name="Pitluck S."/>
            <person name="Pollard M."/>
            <person name="Popkie A.P."/>
            <person name="Predki P."/>
            <person name="Quan G."/>
            <person name="Ramirez L."/>
            <person name="Rash S."/>
            <person name="Retterer J."/>
            <person name="Rodriguez A."/>
            <person name="Rogers S."/>
            <person name="Salamov A."/>
            <person name="Salazar A."/>
            <person name="She X."/>
            <person name="Smith D."/>
            <person name="Slezak T."/>
            <person name="Solovyev V."/>
            <person name="Thayer N."/>
            <person name="Tice H."/>
            <person name="Tsai M."/>
            <person name="Ustaszewska A."/>
            <person name="Vo N."/>
            <person name="Wagner M."/>
            <person name="Wheeler J."/>
            <person name="Wu K."/>
            <person name="Xie G."/>
            <person name="Yang J."/>
            <person name="Dubchak I."/>
            <person name="Furey T.S."/>
            <person name="DeJong P."/>
            <person name="Dickson M."/>
            <person name="Gordon D."/>
            <person name="Eichler E.E."/>
            <person name="Pennacchio L.A."/>
            <person name="Richardson P."/>
            <person name="Stubbs L."/>
            <person name="Rokhsar D.S."/>
            <person name="Myers R.M."/>
            <person name="Rubin E.M."/>
            <person name="Lucas S.M."/>
        </authorList>
    </citation>
    <scope>NUCLEOTIDE SEQUENCE [LARGE SCALE GENOMIC DNA]</scope>
</reference>
<organism>
    <name type="scientific">Homo sapiens</name>
    <name type="common">Human</name>
    <dbReference type="NCBI Taxonomy" id="9606"/>
    <lineage>
        <taxon>Eukaryota</taxon>
        <taxon>Metazoa</taxon>
        <taxon>Chordata</taxon>
        <taxon>Craniata</taxon>
        <taxon>Vertebrata</taxon>
        <taxon>Euteleostomi</taxon>
        <taxon>Mammalia</taxon>
        <taxon>Eutheria</taxon>
        <taxon>Euarchontoglires</taxon>
        <taxon>Primates</taxon>
        <taxon>Haplorrhini</taxon>
        <taxon>Catarrhini</taxon>
        <taxon>Hominidae</taxon>
        <taxon>Homo</taxon>
    </lineage>
</organism>
<evidence type="ECO:0000255" key="1"/>
<evidence type="ECO:0000256" key="2">
    <source>
        <dbReference type="SAM" id="MobiDB-lite"/>
    </source>
</evidence>
<evidence type="ECO:0000305" key="3"/>
<evidence type="ECO:0000312" key="4">
    <source>
        <dbReference type="HGNC" id="HGNC:55823"/>
    </source>
</evidence>
<sequence length="234" mass="24738">MACPQLPPLLLLVLVVLLKAGVNYNTPFTDIVTSENSMETSPVSSLISSPFAHSTHSSGEPPKSYSSTMSLETDSITHLSPSSSGATPTIQPSPSSTDSRMIPSSPQPETITHPSSGSPSAELTPSSHSTLPSSESLTPHWSPTSHSPGTEPLTSTDQTLEPPGPAPGDTGPRELHRNPSVVVVVCLLVSLLLIGSVVMAVRFCHRNESKFENLDEVSMGSVNDRLSFAHHLQE</sequence>
<protein>
    <recommendedName>
        <fullName evidence="3">Protein CIST1</fullName>
    </recommendedName>
    <alternativeName>
        <fullName evidence="4">Colon intestine and stomach enriched-protein 1</fullName>
    </alternativeName>
</protein>
<gene>
    <name evidence="4" type="primary">CIST1</name>
</gene>
<proteinExistence type="inferred from homology"/>
<dbReference type="EMBL" id="AC008397">
    <property type="status" value="NOT_ANNOTATED_CDS"/>
    <property type="molecule type" value="Genomic_DNA"/>
</dbReference>
<dbReference type="RefSeq" id="NP_001382965.1">
    <property type="nucleotide sequence ID" value="NM_001396036.2"/>
</dbReference>
<dbReference type="SMR" id="A0A2R8Y7Y5"/>
<dbReference type="Ensembl" id="ENST00000643046.2">
    <property type="protein sequence ID" value="ENSP00000496487.1"/>
    <property type="gene ID" value="ENSG00000284797.2"/>
</dbReference>
<dbReference type="GeneID" id="729966"/>
<dbReference type="MANE-Select" id="ENST00000643046.2">
    <property type="protein sequence ID" value="ENSP00000496487.1"/>
    <property type="RefSeq nucleotide sequence ID" value="NM_001396036.2"/>
    <property type="RefSeq protein sequence ID" value="NP_001382965.1"/>
</dbReference>
<dbReference type="AGR" id="HGNC:55823"/>
<dbReference type="GeneCards" id="CIST1"/>
<dbReference type="HGNC" id="HGNC:55823">
    <property type="gene designation" value="CIST1"/>
</dbReference>
<dbReference type="VEuPathDB" id="HostDB:ENSG00000284797"/>
<dbReference type="GeneTree" id="ENSGT01030000234883"/>
<dbReference type="InParanoid" id="A0A2R8Y7Y5"/>
<dbReference type="OMA" id="FCHRDES"/>
<dbReference type="OrthoDB" id="9538951at2759"/>
<dbReference type="PAN-GO" id="A0A2R8Y7Y5">
    <property type="GO annotations" value="0 GO annotations based on evolutionary models"/>
</dbReference>
<dbReference type="PRO" id="PR:A0A2R8Y7Y5"/>
<dbReference type="Proteomes" id="UP000005640">
    <property type="component" value="Chromosome 19"/>
</dbReference>
<dbReference type="Bgee" id="ENSG00000284797">
    <property type="expression patterns" value="Expressed in mucosa of transverse colon and 52 other cell types or tissues"/>
</dbReference>
<dbReference type="GO" id="GO:0016020">
    <property type="term" value="C:membrane"/>
    <property type="evidence" value="ECO:0007669"/>
    <property type="project" value="UniProtKB-SubCell"/>
</dbReference>
<comment type="subcellular location">
    <subcellularLocation>
        <location evidence="1">Membrane</location>
        <topology evidence="1">Single-pass type I membrane protein</topology>
    </subcellularLocation>
</comment>
<name>CIST1_HUMAN</name>